<sequence length="190" mass="21537">MASRGKTETSKLKQNLEEQLDRLMQQLQDLEECREELDADEYEETKKETLEQLSEFNDSLKKIMSGNMTLVDELSGMQLAIQAAISQAFKTPEVIRLFAKKQPGQLRTRLAEMDRDLMVGKLERELYTQRKVEILTALRKLGEKLTEDDETFLSANASAVLSQFEKVSTELGSGDKVLALAGFDVEKAKK</sequence>
<reference key="1">
    <citation type="journal article" date="2005" name="Dev. Biol.">
        <title>LZIC regulates neuronal survival during zebrafish development.</title>
        <authorList>
            <person name="Clements W.K."/>
            <person name="Kimelman D."/>
        </authorList>
    </citation>
    <scope>NUCLEOTIDE SEQUENCE [MRNA]</scope>
    <scope>LACK OF INTERACTION WITH CTNNB1</scope>
    <source>
        <tissue>Liver</tissue>
    </source>
</reference>
<reference key="2">
    <citation type="journal article" date="2005" name="Science">
        <title>The transcriptional landscape of the mammalian genome.</title>
        <authorList>
            <person name="Carninci P."/>
            <person name="Kasukawa T."/>
            <person name="Katayama S."/>
            <person name="Gough J."/>
            <person name="Frith M.C."/>
            <person name="Maeda N."/>
            <person name="Oyama R."/>
            <person name="Ravasi T."/>
            <person name="Lenhard B."/>
            <person name="Wells C."/>
            <person name="Kodzius R."/>
            <person name="Shimokawa K."/>
            <person name="Bajic V.B."/>
            <person name="Brenner S.E."/>
            <person name="Batalov S."/>
            <person name="Forrest A.R."/>
            <person name="Zavolan M."/>
            <person name="Davis M.J."/>
            <person name="Wilming L.G."/>
            <person name="Aidinis V."/>
            <person name="Allen J.E."/>
            <person name="Ambesi-Impiombato A."/>
            <person name="Apweiler R."/>
            <person name="Aturaliya R.N."/>
            <person name="Bailey T.L."/>
            <person name="Bansal M."/>
            <person name="Baxter L."/>
            <person name="Beisel K.W."/>
            <person name="Bersano T."/>
            <person name="Bono H."/>
            <person name="Chalk A.M."/>
            <person name="Chiu K.P."/>
            <person name="Choudhary V."/>
            <person name="Christoffels A."/>
            <person name="Clutterbuck D.R."/>
            <person name="Crowe M.L."/>
            <person name="Dalla E."/>
            <person name="Dalrymple B.P."/>
            <person name="de Bono B."/>
            <person name="Della Gatta G."/>
            <person name="di Bernardo D."/>
            <person name="Down T."/>
            <person name="Engstrom P."/>
            <person name="Fagiolini M."/>
            <person name="Faulkner G."/>
            <person name="Fletcher C.F."/>
            <person name="Fukushima T."/>
            <person name="Furuno M."/>
            <person name="Futaki S."/>
            <person name="Gariboldi M."/>
            <person name="Georgii-Hemming P."/>
            <person name="Gingeras T.R."/>
            <person name="Gojobori T."/>
            <person name="Green R.E."/>
            <person name="Gustincich S."/>
            <person name="Harbers M."/>
            <person name="Hayashi Y."/>
            <person name="Hensch T.K."/>
            <person name="Hirokawa N."/>
            <person name="Hill D."/>
            <person name="Huminiecki L."/>
            <person name="Iacono M."/>
            <person name="Ikeo K."/>
            <person name="Iwama A."/>
            <person name="Ishikawa T."/>
            <person name="Jakt M."/>
            <person name="Kanapin A."/>
            <person name="Katoh M."/>
            <person name="Kawasawa Y."/>
            <person name="Kelso J."/>
            <person name="Kitamura H."/>
            <person name="Kitano H."/>
            <person name="Kollias G."/>
            <person name="Krishnan S.P."/>
            <person name="Kruger A."/>
            <person name="Kummerfeld S.K."/>
            <person name="Kurochkin I.V."/>
            <person name="Lareau L.F."/>
            <person name="Lazarevic D."/>
            <person name="Lipovich L."/>
            <person name="Liu J."/>
            <person name="Liuni S."/>
            <person name="McWilliam S."/>
            <person name="Madan Babu M."/>
            <person name="Madera M."/>
            <person name="Marchionni L."/>
            <person name="Matsuda H."/>
            <person name="Matsuzawa S."/>
            <person name="Miki H."/>
            <person name="Mignone F."/>
            <person name="Miyake S."/>
            <person name="Morris K."/>
            <person name="Mottagui-Tabar S."/>
            <person name="Mulder N."/>
            <person name="Nakano N."/>
            <person name="Nakauchi H."/>
            <person name="Ng P."/>
            <person name="Nilsson R."/>
            <person name="Nishiguchi S."/>
            <person name="Nishikawa S."/>
            <person name="Nori F."/>
            <person name="Ohara O."/>
            <person name="Okazaki Y."/>
            <person name="Orlando V."/>
            <person name="Pang K.C."/>
            <person name="Pavan W.J."/>
            <person name="Pavesi G."/>
            <person name="Pesole G."/>
            <person name="Petrovsky N."/>
            <person name="Piazza S."/>
            <person name="Reed J."/>
            <person name="Reid J.F."/>
            <person name="Ring B.Z."/>
            <person name="Ringwald M."/>
            <person name="Rost B."/>
            <person name="Ruan Y."/>
            <person name="Salzberg S.L."/>
            <person name="Sandelin A."/>
            <person name="Schneider C."/>
            <person name="Schoenbach C."/>
            <person name="Sekiguchi K."/>
            <person name="Semple C.A."/>
            <person name="Seno S."/>
            <person name="Sessa L."/>
            <person name="Sheng Y."/>
            <person name="Shibata Y."/>
            <person name="Shimada H."/>
            <person name="Shimada K."/>
            <person name="Silva D."/>
            <person name="Sinclair B."/>
            <person name="Sperling S."/>
            <person name="Stupka E."/>
            <person name="Sugiura K."/>
            <person name="Sultana R."/>
            <person name="Takenaka Y."/>
            <person name="Taki K."/>
            <person name="Tammoja K."/>
            <person name="Tan S.L."/>
            <person name="Tang S."/>
            <person name="Taylor M.S."/>
            <person name="Tegner J."/>
            <person name="Teichmann S.A."/>
            <person name="Ueda H.R."/>
            <person name="van Nimwegen E."/>
            <person name="Verardo R."/>
            <person name="Wei C.L."/>
            <person name="Yagi K."/>
            <person name="Yamanishi H."/>
            <person name="Zabarovsky E."/>
            <person name="Zhu S."/>
            <person name="Zimmer A."/>
            <person name="Hide W."/>
            <person name="Bult C."/>
            <person name="Grimmond S.M."/>
            <person name="Teasdale R.D."/>
            <person name="Liu E.T."/>
            <person name="Brusic V."/>
            <person name="Quackenbush J."/>
            <person name="Wahlestedt C."/>
            <person name="Mattick J.S."/>
            <person name="Hume D.A."/>
            <person name="Kai C."/>
            <person name="Sasaki D."/>
            <person name="Tomaru Y."/>
            <person name="Fukuda S."/>
            <person name="Kanamori-Katayama M."/>
            <person name="Suzuki M."/>
            <person name="Aoki J."/>
            <person name="Arakawa T."/>
            <person name="Iida J."/>
            <person name="Imamura K."/>
            <person name="Itoh M."/>
            <person name="Kato T."/>
            <person name="Kawaji H."/>
            <person name="Kawagashira N."/>
            <person name="Kawashima T."/>
            <person name="Kojima M."/>
            <person name="Kondo S."/>
            <person name="Konno H."/>
            <person name="Nakano K."/>
            <person name="Ninomiya N."/>
            <person name="Nishio T."/>
            <person name="Okada M."/>
            <person name="Plessy C."/>
            <person name="Shibata K."/>
            <person name="Shiraki T."/>
            <person name="Suzuki S."/>
            <person name="Tagami M."/>
            <person name="Waki K."/>
            <person name="Watahiki A."/>
            <person name="Okamura-Oho Y."/>
            <person name="Suzuki H."/>
            <person name="Kawai J."/>
            <person name="Hayashizaki Y."/>
        </authorList>
    </citation>
    <scope>NUCLEOTIDE SEQUENCE [LARGE SCALE MRNA]</scope>
    <source>
        <strain>C57BL/6J</strain>
        <tissue>Heart</tissue>
        <tissue>Pancreas</tissue>
    </source>
</reference>
<reference key="3">
    <citation type="journal article" date="2004" name="Genome Res.">
        <title>The status, quality, and expansion of the NIH full-length cDNA project: the Mammalian Gene Collection (MGC).</title>
        <authorList>
            <consortium name="The MGC Project Team"/>
        </authorList>
    </citation>
    <scope>NUCLEOTIDE SEQUENCE [LARGE SCALE MRNA]</scope>
    <source>
        <strain>FVB/N</strain>
        <tissue>Mammary tumor</tissue>
    </source>
</reference>
<reference key="4">
    <citation type="journal article" date="2010" name="Cell">
        <title>A tissue-specific atlas of mouse protein phosphorylation and expression.</title>
        <authorList>
            <person name="Huttlin E.L."/>
            <person name="Jedrychowski M.P."/>
            <person name="Elias J.E."/>
            <person name="Goswami T."/>
            <person name="Rad R."/>
            <person name="Beausoleil S.A."/>
            <person name="Villen J."/>
            <person name="Haas W."/>
            <person name="Sowa M.E."/>
            <person name="Gygi S.P."/>
        </authorList>
    </citation>
    <scope>IDENTIFICATION BY MASS SPECTROMETRY [LARGE SCALE ANALYSIS]</scope>
    <source>
        <tissue>Brain</tissue>
        <tissue>Brown adipose tissue</tissue>
        <tissue>Heart</tissue>
        <tissue>Kidney</tissue>
        <tissue>Liver</tissue>
        <tissue>Lung</tissue>
        <tissue>Pancreas</tissue>
        <tissue>Spleen</tissue>
        <tissue>Testis</tissue>
    </source>
</reference>
<comment type="subunit">
    <text>Does not interact with CTNNB1.</text>
</comment>
<comment type="similarity">
    <text evidence="2">Belongs to the CTNNBIP1 family.</text>
</comment>
<name>LZIC_MOUSE</name>
<evidence type="ECO:0000255" key="1"/>
<evidence type="ECO:0000305" key="2"/>
<proteinExistence type="evidence at protein level"/>
<keyword id="KW-0175">Coiled coil</keyword>
<keyword id="KW-1185">Reference proteome</keyword>
<feature type="chain" id="PRO_0000263692" description="Protein LZIC">
    <location>
        <begin position="1"/>
        <end position="190"/>
    </location>
</feature>
<feature type="coiled-coil region" evidence="1">
    <location>
        <begin position="2"/>
        <end position="63"/>
    </location>
</feature>
<dbReference type="EMBL" id="DQ058008">
    <property type="protein sequence ID" value="AAY67865.1"/>
    <property type="molecule type" value="mRNA"/>
</dbReference>
<dbReference type="EMBL" id="AK007657">
    <property type="protein sequence ID" value="BAB25167.2"/>
    <property type="molecule type" value="mRNA"/>
</dbReference>
<dbReference type="EMBL" id="AK146824">
    <property type="protein sequence ID" value="BAE27461.1"/>
    <property type="molecule type" value="mRNA"/>
</dbReference>
<dbReference type="EMBL" id="BC023174">
    <property type="protein sequence ID" value="AAH23174.1"/>
    <property type="molecule type" value="mRNA"/>
</dbReference>
<dbReference type="CCDS" id="CCDS18961.1"/>
<dbReference type="RefSeq" id="NP_001343251.1">
    <property type="nucleotide sequence ID" value="NM_001356322.1"/>
</dbReference>
<dbReference type="RefSeq" id="NP_081239.1">
    <property type="nucleotide sequence ID" value="NM_026963.6"/>
</dbReference>
<dbReference type="RefSeq" id="XP_006539216.1">
    <property type="nucleotide sequence ID" value="XM_006539153.3"/>
</dbReference>
<dbReference type="RefSeq" id="XP_017175871.1">
    <property type="nucleotide sequence ID" value="XM_017320382.3"/>
</dbReference>
<dbReference type="RefSeq" id="XP_030109622.1">
    <property type="nucleotide sequence ID" value="XM_030253762.2"/>
</dbReference>
<dbReference type="RefSeq" id="XP_030109623.1">
    <property type="nucleotide sequence ID" value="XM_030253763.2"/>
</dbReference>
<dbReference type="RefSeq" id="XP_036020296.1">
    <property type="nucleotide sequence ID" value="XM_036164403.1"/>
</dbReference>
<dbReference type="SMR" id="Q8K3C3"/>
<dbReference type="FunCoup" id="Q8K3C3">
    <property type="interactions" value="617"/>
</dbReference>
<dbReference type="STRING" id="10090.ENSMUSP00000030842"/>
<dbReference type="GlyGen" id="Q8K3C3">
    <property type="glycosylation" value="2 sites, 1 N-linked glycan (1 site), 1 O-linked glycan (1 site)"/>
</dbReference>
<dbReference type="iPTMnet" id="Q8K3C3"/>
<dbReference type="PhosphoSitePlus" id="Q8K3C3"/>
<dbReference type="SwissPalm" id="Q8K3C3"/>
<dbReference type="jPOST" id="Q8K3C3"/>
<dbReference type="PaxDb" id="10090-ENSMUSP00000030842"/>
<dbReference type="PeptideAtlas" id="Q8K3C3"/>
<dbReference type="ProteomicsDB" id="292158"/>
<dbReference type="Pumba" id="Q8K3C3"/>
<dbReference type="Antibodypedia" id="27776">
    <property type="antibodies" value="351 antibodies from 21 providers"/>
</dbReference>
<dbReference type="DNASU" id="69151"/>
<dbReference type="Ensembl" id="ENSMUST00000030842.8">
    <property type="protein sequence ID" value="ENSMUSP00000030842.8"/>
    <property type="gene ID" value="ENSMUSG00000028990.14"/>
</dbReference>
<dbReference type="GeneID" id="69151"/>
<dbReference type="KEGG" id="mmu:69151"/>
<dbReference type="UCSC" id="uc008vwl.1">
    <property type="organism name" value="mouse"/>
</dbReference>
<dbReference type="AGR" id="MGI:1916401"/>
<dbReference type="CTD" id="84328"/>
<dbReference type="MGI" id="MGI:1916401">
    <property type="gene designation" value="Lzic"/>
</dbReference>
<dbReference type="VEuPathDB" id="HostDB:ENSMUSG00000028990"/>
<dbReference type="eggNOG" id="ENOG502QPUB">
    <property type="taxonomic scope" value="Eukaryota"/>
</dbReference>
<dbReference type="GeneTree" id="ENSGT00940000159001"/>
<dbReference type="HOGENOM" id="CLU_091171_0_0_1"/>
<dbReference type="InParanoid" id="Q8K3C3"/>
<dbReference type="OMA" id="TKMMAGN"/>
<dbReference type="OrthoDB" id="10262856at2759"/>
<dbReference type="PhylomeDB" id="Q8K3C3"/>
<dbReference type="TreeFam" id="TF314533"/>
<dbReference type="BioGRID-ORCS" id="69151">
    <property type="hits" value="3 hits in 76 CRISPR screens"/>
</dbReference>
<dbReference type="ChiTaRS" id="Lzic">
    <property type="organism name" value="mouse"/>
</dbReference>
<dbReference type="PRO" id="PR:Q8K3C3"/>
<dbReference type="Proteomes" id="UP000000589">
    <property type="component" value="Chromosome 4"/>
</dbReference>
<dbReference type="RNAct" id="Q8K3C3">
    <property type="molecule type" value="protein"/>
</dbReference>
<dbReference type="Bgee" id="ENSMUSG00000028990">
    <property type="expression patterns" value="Expressed in manus and 214 other cell types or tissues"/>
</dbReference>
<dbReference type="ExpressionAtlas" id="Q8K3C3">
    <property type="expression patterns" value="baseline and differential"/>
</dbReference>
<dbReference type="GO" id="GO:0008013">
    <property type="term" value="F:beta-catenin binding"/>
    <property type="evidence" value="ECO:0007669"/>
    <property type="project" value="InterPro"/>
</dbReference>
<dbReference type="GO" id="GO:0010212">
    <property type="term" value="P:response to ionizing radiation"/>
    <property type="evidence" value="ECO:0007669"/>
    <property type="project" value="Ensembl"/>
</dbReference>
<dbReference type="FunFam" id="1.10.10.490:FF:000002">
    <property type="entry name" value="protein LZIC isoform X1"/>
    <property type="match status" value="1"/>
</dbReference>
<dbReference type="Gene3D" id="1.10.10.490">
    <property type="entry name" value="Beta-catenin-interacting ICAT"/>
    <property type="match status" value="1"/>
</dbReference>
<dbReference type="InterPro" id="IPR009428">
    <property type="entry name" value="ICAT_dom"/>
</dbReference>
<dbReference type="InterPro" id="IPR036911">
    <property type="entry name" value="ICAT_sf"/>
</dbReference>
<dbReference type="PANTHER" id="PTHR47142">
    <property type="entry name" value="BETA-CATENIN-INTERACTING PROTEIN 1"/>
    <property type="match status" value="1"/>
</dbReference>
<dbReference type="PANTHER" id="PTHR47142:SF1">
    <property type="entry name" value="BETA-CATENIN-INTERACTING PROTEIN 1"/>
    <property type="match status" value="1"/>
</dbReference>
<dbReference type="Pfam" id="PF06384">
    <property type="entry name" value="ICAT"/>
    <property type="match status" value="1"/>
</dbReference>
<dbReference type="SUPFAM" id="SSF81730">
    <property type="entry name" value="beta-catenin-interacting protein ICAT"/>
    <property type="match status" value="1"/>
</dbReference>
<gene>
    <name type="primary">Lzic</name>
</gene>
<organism>
    <name type="scientific">Mus musculus</name>
    <name type="common">Mouse</name>
    <dbReference type="NCBI Taxonomy" id="10090"/>
    <lineage>
        <taxon>Eukaryota</taxon>
        <taxon>Metazoa</taxon>
        <taxon>Chordata</taxon>
        <taxon>Craniata</taxon>
        <taxon>Vertebrata</taxon>
        <taxon>Euteleostomi</taxon>
        <taxon>Mammalia</taxon>
        <taxon>Eutheria</taxon>
        <taxon>Euarchontoglires</taxon>
        <taxon>Glires</taxon>
        <taxon>Rodentia</taxon>
        <taxon>Myomorpha</taxon>
        <taxon>Muroidea</taxon>
        <taxon>Muridae</taxon>
        <taxon>Murinae</taxon>
        <taxon>Mus</taxon>
        <taxon>Mus</taxon>
    </lineage>
</organism>
<protein>
    <recommendedName>
        <fullName>Protein LZIC</fullName>
    </recommendedName>
    <alternativeName>
        <fullName>Leucine zipper and CTNNBIP1 domain-containing protein</fullName>
    </alternativeName>
    <alternativeName>
        <fullName>Leucine zipper and ICAT homologous domain-containing protein</fullName>
    </alternativeName>
</protein>
<accession>Q8K3C3</accession>
<accession>Q9D8V3</accession>